<feature type="chain" id="PRO_0000118241" description="NADH-ubiquinone oxidoreductase chain 6">
    <location>
        <begin position="1"/>
        <end position="167"/>
    </location>
</feature>
<feature type="transmembrane region" description="Helical" evidence="2">
    <location>
        <begin position="5"/>
        <end position="25"/>
    </location>
</feature>
<feature type="transmembrane region" description="Helical" evidence="2">
    <location>
        <begin position="34"/>
        <end position="54"/>
    </location>
</feature>
<feature type="transmembrane region" description="Helical" evidence="2">
    <location>
        <begin position="60"/>
        <end position="80"/>
    </location>
</feature>
<feature type="transmembrane region" description="Helical" evidence="2">
    <location>
        <begin position="138"/>
        <end position="158"/>
    </location>
</feature>
<reference key="1">
    <citation type="journal article" date="1993" name="Genetics">
        <title>The mitochondrial genome of the honeybee Apis mellifera: complete sequence and genome organization.</title>
        <authorList>
            <person name="Crozier R.H."/>
            <person name="Crozier Y.C."/>
        </authorList>
    </citation>
    <scope>NUCLEOTIDE SEQUENCE [GENOMIC DNA]</scope>
    <source>
        <tissue>Thorax</tissue>
    </source>
</reference>
<protein>
    <recommendedName>
        <fullName>NADH-ubiquinone oxidoreductase chain 6</fullName>
        <ecNumber>7.1.1.2</ecNumber>
    </recommendedName>
    <alternativeName>
        <fullName>NADH dehydrogenase subunit 6</fullName>
    </alternativeName>
</protein>
<sequence>MMLTIIMLSKIFMSSLISMILTIYLNNIFNSPSMLLIYLISYSIYMSLMMFTMCSMNSLLILMILIVFLSGMLIMFSYFISLINEPLKLKMKPFIQTLFLIIITMKIYNKLSQNEHYFNYFKNIDLMYLYMKMNSTLFFIMILMLIITLILMTKITYIEKKTLRKKK</sequence>
<dbReference type="EC" id="7.1.1.2"/>
<dbReference type="EMBL" id="L06178">
    <property type="protein sequence ID" value="AAB96808.1"/>
    <property type="molecule type" value="Genomic_DNA"/>
</dbReference>
<dbReference type="PIR" id="S52970">
    <property type="entry name" value="S52970"/>
</dbReference>
<dbReference type="RefSeq" id="NP_008092.1">
    <property type="nucleotide sequence ID" value="NC_001566.1"/>
</dbReference>
<dbReference type="SMR" id="P34857"/>
<dbReference type="GeneID" id="807697"/>
<dbReference type="CTD" id="4541"/>
<dbReference type="GO" id="GO:0031966">
    <property type="term" value="C:mitochondrial membrane"/>
    <property type="evidence" value="ECO:0007669"/>
    <property type="project" value="UniProtKB-SubCell"/>
</dbReference>
<dbReference type="GO" id="GO:0008137">
    <property type="term" value="F:NADH dehydrogenase (ubiquinone) activity"/>
    <property type="evidence" value="ECO:0007669"/>
    <property type="project" value="UniProtKB-EC"/>
</dbReference>
<organism>
    <name type="scientific">Apis mellifera ligustica</name>
    <name type="common">Common honeybee</name>
    <name type="synonym">Italian honeybee</name>
    <dbReference type="NCBI Taxonomy" id="7469"/>
    <lineage>
        <taxon>Eukaryota</taxon>
        <taxon>Metazoa</taxon>
        <taxon>Ecdysozoa</taxon>
        <taxon>Arthropoda</taxon>
        <taxon>Hexapoda</taxon>
        <taxon>Insecta</taxon>
        <taxon>Pterygota</taxon>
        <taxon>Neoptera</taxon>
        <taxon>Endopterygota</taxon>
        <taxon>Hymenoptera</taxon>
        <taxon>Apocrita</taxon>
        <taxon>Aculeata</taxon>
        <taxon>Apoidea</taxon>
        <taxon>Anthophila</taxon>
        <taxon>Apidae</taxon>
        <taxon>Apis</taxon>
    </lineage>
</organism>
<gene>
    <name type="primary">ND6</name>
</gene>
<geneLocation type="mitochondrion"/>
<accession>P34857</accession>
<name>NU6M_APILI</name>
<keyword id="KW-0249">Electron transport</keyword>
<keyword id="KW-0472">Membrane</keyword>
<keyword id="KW-0496">Mitochondrion</keyword>
<keyword id="KW-0520">NAD</keyword>
<keyword id="KW-0679">Respiratory chain</keyword>
<keyword id="KW-1278">Translocase</keyword>
<keyword id="KW-0812">Transmembrane</keyword>
<keyword id="KW-1133">Transmembrane helix</keyword>
<keyword id="KW-0813">Transport</keyword>
<keyword id="KW-0830">Ubiquinone</keyword>
<evidence type="ECO:0000250" key="1"/>
<evidence type="ECO:0000255" key="2"/>
<evidence type="ECO:0000305" key="3"/>
<proteinExistence type="inferred from homology"/>
<comment type="function">
    <text evidence="1">Core subunit of the mitochondrial membrane respiratory chain NADH dehydrogenase (Complex I) that is believed to belong to the minimal assembly required for catalysis. Complex I functions in the transfer of electrons from NADH to the respiratory chain. The immediate electron acceptor for the enzyme is believed to be ubiquinone (By similarity).</text>
</comment>
<comment type="catalytic activity">
    <reaction>
        <text>a ubiquinone + NADH + 5 H(+)(in) = a ubiquinol + NAD(+) + 4 H(+)(out)</text>
        <dbReference type="Rhea" id="RHEA:29091"/>
        <dbReference type="Rhea" id="RHEA-COMP:9565"/>
        <dbReference type="Rhea" id="RHEA-COMP:9566"/>
        <dbReference type="ChEBI" id="CHEBI:15378"/>
        <dbReference type="ChEBI" id="CHEBI:16389"/>
        <dbReference type="ChEBI" id="CHEBI:17976"/>
        <dbReference type="ChEBI" id="CHEBI:57540"/>
        <dbReference type="ChEBI" id="CHEBI:57945"/>
        <dbReference type="EC" id="7.1.1.2"/>
    </reaction>
</comment>
<comment type="subcellular location">
    <subcellularLocation>
        <location evidence="3">Mitochondrion membrane</location>
        <topology evidence="3">Multi-pass membrane protein</topology>
    </subcellularLocation>
</comment>
<comment type="similarity">
    <text evidence="3">Belongs to the complex I subunit 6 family.</text>
</comment>